<accession>Q05928</accession>
<feature type="signal peptide" evidence="5">
    <location>
        <begin position="1"/>
        <end position="31"/>
    </location>
</feature>
<feature type="chain" id="PRO_0000300686" description="Probetacellulin">
    <location>
        <begin position="32"/>
        <end position="177"/>
    </location>
</feature>
<feature type="chain" id="PRO_0000007492" description="Betacellulin">
    <location>
        <begin position="32"/>
        <end position="111"/>
    </location>
</feature>
<feature type="propeptide" id="PRO_0000007493" description="Removed in mature form">
    <location>
        <begin position="112"/>
        <end position="177"/>
    </location>
</feature>
<feature type="topological domain" description="Extracellular" evidence="1">
    <location>
        <begin position="32"/>
        <end position="118"/>
    </location>
</feature>
<feature type="transmembrane region" description="Helical" evidence="1">
    <location>
        <begin position="119"/>
        <end position="139"/>
    </location>
</feature>
<feature type="topological domain" description="Cytoplasmic" evidence="1">
    <location>
        <begin position="140"/>
        <end position="177"/>
    </location>
</feature>
<feature type="domain" description="EGF-like" evidence="2">
    <location>
        <begin position="65"/>
        <end position="105"/>
    </location>
</feature>
<feature type="region of interest" description="Disordered" evidence="3">
    <location>
        <begin position="153"/>
        <end position="177"/>
    </location>
</feature>
<feature type="compositionally biased region" description="Basic and acidic residues" evidence="3">
    <location>
        <begin position="154"/>
        <end position="167"/>
    </location>
</feature>
<feature type="glycosylation site" description="N-linked (GlcNAc...) asparagine" evidence="1">
    <location>
        <position position="34"/>
    </location>
</feature>
<feature type="glycosylation site" description="N-linked (GlcNAc...) asparagine" evidence="1">
    <location>
        <position position="42"/>
    </location>
</feature>
<feature type="glycosylation site" description="N-linked (GlcNAc...) asparagine" evidence="1">
    <location>
        <position position="52"/>
    </location>
</feature>
<feature type="disulfide bond" evidence="2">
    <location>
        <begin position="69"/>
        <end position="82"/>
    </location>
</feature>
<feature type="disulfide bond" evidence="2">
    <location>
        <begin position="77"/>
        <end position="93"/>
    </location>
</feature>
<feature type="disulfide bond" evidence="2">
    <location>
        <begin position="95"/>
        <end position="104"/>
    </location>
</feature>
<evidence type="ECO:0000255" key="1"/>
<evidence type="ECO:0000255" key="2">
    <source>
        <dbReference type="PROSITE-ProRule" id="PRU00076"/>
    </source>
</evidence>
<evidence type="ECO:0000256" key="3">
    <source>
        <dbReference type="SAM" id="MobiDB-lite"/>
    </source>
</evidence>
<evidence type="ECO:0000269" key="4">
    <source>
    </source>
</evidence>
<evidence type="ECO:0000269" key="5">
    <source>
    </source>
</evidence>
<gene>
    <name type="primary">Btc</name>
    <name type="synonym">Bcn</name>
</gene>
<comment type="function">
    <text evidence="4">Growth factor that binds to EGFR, ERBB4 and other EGF receptor family members. Potent mitogen for retinal pigment epithelial cells and vascular smooth muscle cells.</text>
</comment>
<comment type="subunit">
    <text>Monomer. Interacts with EGFR and ERBB4.</text>
</comment>
<comment type="subcellular location">
    <molecule>Betacellulin</molecule>
    <subcellularLocation>
        <location>Secreted</location>
        <location>Extracellular space</location>
    </subcellularLocation>
</comment>
<comment type="subcellular location">
    <molecule>Probetacellulin</molecule>
    <subcellularLocation>
        <location>Cell membrane</location>
        <topology>Single-pass type I membrane protein</topology>
    </subcellularLocation>
</comment>
<comment type="tissue specificity">
    <text>Found in several mouse tissues including kidney, uterus and liver, as well as in beta tumor cell line and MCF-7 cells. It is not detected in the brain.</text>
</comment>
<name>BTC_MOUSE</name>
<sequence>MDPTAPGSSVSSLPLLLVLALGLAILHCVVADGNTTRTPETNGSLCGAPGENCTGTTPRQKVKTHFSRCPKQYKHYCIHGRCRFVVDEQTPSCICEKGYFGARCERVDLFYLQQDRGQILVVCLIVVMVVFIILVIGVCTCCHPLRKHRKKKKEEKMETLDKDKTPISEDIQETNIA</sequence>
<reference key="1">
    <citation type="journal article" date="1993" name="Science">
        <title>Betacellulin: a mitogen from pancreatic beta cell tumors.</title>
        <authorList>
            <person name="Shing Y."/>
            <person name="Christofori G."/>
            <person name="Hanahan D."/>
            <person name="Ono Y."/>
            <person name="Sasada R."/>
            <person name="Igarashi K."/>
            <person name="Folkman J."/>
        </authorList>
    </citation>
    <scope>NUCLEOTIDE SEQUENCE [MRNA]</scope>
    <scope>PROTEIN SEQUENCE OF 32-54; 64-71 AND 75-111</scope>
    <source>
        <tissue>Pancreas</tissue>
    </source>
</reference>
<reference key="2">
    <citation type="journal article" date="2005" name="Science">
        <title>The transcriptional landscape of the mammalian genome.</title>
        <authorList>
            <person name="Carninci P."/>
            <person name="Kasukawa T."/>
            <person name="Katayama S."/>
            <person name="Gough J."/>
            <person name="Frith M.C."/>
            <person name="Maeda N."/>
            <person name="Oyama R."/>
            <person name="Ravasi T."/>
            <person name="Lenhard B."/>
            <person name="Wells C."/>
            <person name="Kodzius R."/>
            <person name="Shimokawa K."/>
            <person name="Bajic V.B."/>
            <person name="Brenner S.E."/>
            <person name="Batalov S."/>
            <person name="Forrest A.R."/>
            <person name="Zavolan M."/>
            <person name="Davis M.J."/>
            <person name="Wilming L.G."/>
            <person name="Aidinis V."/>
            <person name="Allen J.E."/>
            <person name="Ambesi-Impiombato A."/>
            <person name="Apweiler R."/>
            <person name="Aturaliya R.N."/>
            <person name="Bailey T.L."/>
            <person name="Bansal M."/>
            <person name="Baxter L."/>
            <person name="Beisel K.W."/>
            <person name="Bersano T."/>
            <person name="Bono H."/>
            <person name="Chalk A.M."/>
            <person name="Chiu K.P."/>
            <person name="Choudhary V."/>
            <person name="Christoffels A."/>
            <person name="Clutterbuck D.R."/>
            <person name="Crowe M.L."/>
            <person name="Dalla E."/>
            <person name="Dalrymple B.P."/>
            <person name="de Bono B."/>
            <person name="Della Gatta G."/>
            <person name="di Bernardo D."/>
            <person name="Down T."/>
            <person name="Engstrom P."/>
            <person name="Fagiolini M."/>
            <person name="Faulkner G."/>
            <person name="Fletcher C.F."/>
            <person name="Fukushima T."/>
            <person name="Furuno M."/>
            <person name="Futaki S."/>
            <person name="Gariboldi M."/>
            <person name="Georgii-Hemming P."/>
            <person name="Gingeras T.R."/>
            <person name="Gojobori T."/>
            <person name="Green R.E."/>
            <person name="Gustincich S."/>
            <person name="Harbers M."/>
            <person name="Hayashi Y."/>
            <person name="Hensch T.K."/>
            <person name="Hirokawa N."/>
            <person name="Hill D."/>
            <person name="Huminiecki L."/>
            <person name="Iacono M."/>
            <person name="Ikeo K."/>
            <person name="Iwama A."/>
            <person name="Ishikawa T."/>
            <person name="Jakt M."/>
            <person name="Kanapin A."/>
            <person name="Katoh M."/>
            <person name="Kawasawa Y."/>
            <person name="Kelso J."/>
            <person name="Kitamura H."/>
            <person name="Kitano H."/>
            <person name="Kollias G."/>
            <person name="Krishnan S.P."/>
            <person name="Kruger A."/>
            <person name="Kummerfeld S.K."/>
            <person name="Kurochkin I.V."/>
            <person name="Lareau L.F."/>
            <person name="Lazarevic D."/>
            <person name="Lipovich L."/>
            <person name="Liu J."/>
            <person name="Liuni S."/>
            <person name="McWilliam S."/>
            <person name="Madan Babu M."/>
            <person name="Madera M."/>
            <person name="Marchionni L."/>
            <person name="Matsuda H."/>
            <person name="Matsuzawa S."/>
            <person name="Miki H."/>
            <person name="Mignone F."/>
            <person name="Miyake S."/>
            <person name="Morris K."/>
            <person name="Mottagui-Tabar S."/>
            <person name="Mulder N."/>
            <person name="Nakano N."/>
            <person name="Nakauchi H."/>
            <person name="Ng P."/>
            <person name="Nilsson R."/>
            <person name="Nishiguchi S."/>
            <person name="Nishikawa S."/>
            <person name="Nori F."/>
            <person name="Ohara O."/>
            <person name="Okazaki Y."/>
            <person name="Orlando V."/>
            <person name="Pang K.C."/>
            <person name="Pavan W.J."/>
            <person name="Pavesi G."/>
            <person name="Pesole G."/>
            <person name="Petrovsky N."/>
            <person name="Piazza S."/>
            <person name="Reed J."/>
            <person name="Reid J.F."/>
            <person name="Ring B.Z."/>
            <person name="Ringwald M."/>
            <person name="Rost B."/>
            <person name="Ruan Y."/>
            <person name="Salzberg S.L."/>
            <person name="Sandelin A."/>
            <person name="Schneider C."/>
            <person name="Schoenbach C."/>
            <person name="Sekiguchi K."/>
            <person name="Semple C.A."/>
            <person name="Seno S."/>
            <person name="Sessa L."/>
            <person name="Sheng Y."/>
            <person name="Shibata Y."/>
            <person name="Shimada H."/>
            <person name="Shimada K."/>
            <person name="Silva D."/>
            <person name="Sinclair B."/>
            <person name="Sperling S."/>
            <person name="Stupka E."/>
            <person name="Sugiura K."/>
            <person name="Sultana R."/>
            <person name="Takenaka Y."/>
            <person name="Taki K."/>
            <person name="Tammoja K."/>
            <person name="Tan S.L."/>
            <person name="Tang S."/>
            <person name="Taylor M.S."/>
            <person name="Tegner J."/>
            <person name="Teichmann S.A."/>
            <person name="Ueda H.R."/>
            <person name="van Nimwegen E."/>
            <person name="Verardo R."/>
            <person name="Wei C.L."/>
            <person name="Yagi K."/>
            <person name="Yamanishi H."/>
            <person name="Zabarovsky E."/>
            <person name="Zhu S."/>
            <person name="Zimmer A."/>
            <person name="Hide W."/>
            <person name="Bult C."/>
            <person name="Grimmond S.M."/>
            <person name="Teasdale R.D."/>
            <person name="Liu E.T."/>
            <person name="Brusic V."/>
            <person name="Quackenbush J."/>
            <person name="Wahlestedt C."/>
            <person name="Mattick J.S."/>
            <person name="Hume D.A."/>
            <person name="Kai C."/>
            <person name="Sasaki D."/>
            <person name="Tomaru Y."/>
            <person name="Fukuda S."/>
            <person name="Kanamori-Katayama M."/>
            <person name="Suzuki M."/>
            <person name="Aoki J."/>
            <person name="Arakawa T."/>
            <person name="Iida J."/>
            <person name="Imamura K."/>
            <person name="Itoh M."/>
            <person name="Kato T."/>
            <person name="Kawaji H."/>
            <person name="Kawagashira N."/>
            <person name="Kawashima T."/>
            <person name="Kojima M."/>
            <person name="Kondo S."/>
            <person name="Konno H."/>
            <person name="Nakano K."/>
            <person name="Ninomiya N."/>
            <person name="Nishio T."/>
            <person name="Okada M."/>
            <person name="Plessy C."/>
            <person name="Shibata K."/>
            <person name="Shiraki T."/>
            <person name="Suzuki S."/>
            <person name="Tagami M."/>
            <person name="Waki K."/>
            <person name="Watahiki A."/>
            <person name="Okamura-Oho Y."/>
            <person name="Suzuki H."/>
            <person name="Kawai J."/>
            <person name="Hayashizaki Y."/>
        </authorList>
    </citation>
    <scope>NUCLEOTIDE SEQUENCE [LARGE SCALE MRNA]</scope>
    <source>
        <strain>C57BL/6J</strain>
        <tissue>Skin</tissue>
    </source>
</reference>
<reference key="3">
    <citation type="journal article" date="2011" name="PLoS ONE">
        <title>Betacellulin-induced beta cell proliferation and regeneration is mediated by activation of ErbB-1 and ErbB-2 receptors.</title>
        <authorList>
            <person name="Oh Y.S."/>
            <person name="Shin S."/>
            <person name="Lee Y.J."/>
            <person name="Kim E.H."/>
            <person name="Jun H.S."/>
        </authorList>
    </citation>
    <scope>FUNCTION</scope>
</reference>
<organism>
    <name type="scientific">Mus musculus</name>
    <name type="common">Mouse</name>
    <dbReference type="NCBI Taxonomy" id="10090"/>
    <lineage>
        <taxon>Eukaryota</taxon>
        <taxon>Metazoa</taxon>
        <taxon>Chordata</taxon>
        <taxon>Craniata</taxon>
        <taxon>Vertebrata</taxon>
        <taxon>Euteleostomi</taxon>
        <taxon>Mammalia</taxon>
        <taxon>Eutheria</taxon>
        <taxon>Euarchontoglires</taxon>
        <taxon>Glires</taxon>
        <taxon>Rodentia</taxon>
        <taxon>Myomorpha</taxon>
        <taxon>Muroidea</taxon>
        <taxon>Muridae</taxon>
        <taxon>Murinae</taxon>
        <taxon>Mus</taxon>
        <taxon>Mus</taxon>
    </lineage>
</organism>
<proteinExistence type="evidence at protein level"/>
<protein>
    <recommendedName>
        <fullName>Probetacellulin</fullName>
    </recommendedName>
    <component>
        <recommendedName>
            <fullName>Betacellulin</fullName>
            <shortName>BTC</shortName>
        </recommendedName>
    </component>
</protein>
<keyword id="KW-1003">Cell membrane</keyword>
<keyword id="KW-0903">Direct protein sequencing</keyword>
<keyword id="KW-1015">Disulfide bond</keyword>
<keyword id="KW-0245">EGF-like domain</keyword>
<keyword id="KW-0325">Glycoprotein</keyword>
<keyword id="KW-0339">Growth factor</keyword>
<keyword id="KW-0472">Membrane</keyword>
<keyword id="KW-0497">Mitogen</keyword>
<keyword id="KW-1185">Reference proteome</keyword>
<keyword id="KW-0964">Secreted</keyword>
<keyword id="KW-0732">Signal</keyword>
<keyword id="KW-0812">Transmembrane</keyword>
<keyword id="KW-1133">Transmembrane helix</keyword>
<dbReference type="EMBL" id="L08394">
    <property type="protein sequence ID" value="AAA40511.1"/>
    <property type="molecule type" value="mRNA"/>
</dbReference>
<dbReference type="EMBL" id="AK076272">
    <property type="protein sequence ID" value="BAC36281.1"/>
    <property type="molecule type" value="mRNA"/>
</dbReference>
<dbReference type="CCDS" id="CCDS19422.1"/>
<dbReference type="PIR" id="A37408">
    <property type="entry name" value="A37408"/>
</dbReference>
<dbReference type="RefSeq" id="NP_031594.1">
    <property type="nucleotide sequence ID" value="NM_007568.5"/>
</dbReference>
<dbReference type="SMR" id="Q05928"/>
<dbReference type="BioGRID" id="198395">
    <property type="interactions" value="4"/>
</dbReference>
<dbReference type="FunCoup" id="Q05928">
    <property type="interactions" value="351"/>
</dbReference>
<dbReference type="STRING" id="10090.ENSMUSP00000112765"/>
<dbReference type="GlyCosmos" id="Q05928">
    <property type="glycosylation" value="3 sites, No reported glycans"/>
</dbReference>
<dbReference type="GlyGen" id="Q05928">
    <property type="glycosylation" value="3 sites"/>
</dbReference>
<dbReference type="iPTMnet" id="Q05928"/>
<dbReference type="PhosphoSitePlus" id="Q05928"/>
<dbReference type="PaxDb" id="10090-ENSMUSP00000112765"/>
<dbReference type="PeptideAtlas" id="Q05928"/>
<dbReference type="ProteomicsDB" id="273712"/>
<dbReference type="Antibodypedia" id="13367">
    <property type="antibodies" value="432 antibodies from 34 providers"/>
</dbReference>
<dbReference type="DNASU" id="12223"/>
<dbReference type="Ensembl" id="ENSMUST00000121044.6">
    <property type="protein sequence ID" value="ENSMUSP00000112765.3"/>
    <property type="gene ID" value="ENSMUSG00000082361.7"/>
</dbReference>
<dbReference type="GeneID" id="12223"/>
<dbReference type="KEGG" id="mmu:12223"/>
<dbReference type="UCSC" id="uc008ybv.2">
    <property type="organism name" value="mouse"/>
</dbReference>
<dbReference type="AGR" id="MGI:99439"/>
<dbReference type="CTD" id="685"/>
<dbReference type="MGI" id="MGI:99439">
    <property type="gene designation" value="Btc"/>
</dbReference>
<dbReference type="VEuPathDB" id="HostDB:ENSMUSG00000082361"/>
<dbReference type="eggNOG" id="ENOG502RZHQ">
    <property type="taxonomic scope" value="Eukaryota"/>
</dbReference>
<dbReference type="GeneTree" id="ENSGT00940000160508"/>
<dbReference type="HOGENOM" id="CLU_112513_1_0_1"/>
<dbReference type="InParanoid" id="Q05928"/>
<dbReference type="OMA" id="QPKRKGH"/>
<dbReference type="OrthoDB" id="6233064at2759"/>
<dbReference type="PhylomeDB" id="Q05928"/>
<dbReference type="TreeFam" id="TF332938"/>
<dbReference type="Reactome" id="R-MMU-1227986">
    <property type="pathway name" value="Signaling by ERBB2"/>
</dbReference>
<dbReference type="Reactome" id="R-MMU-1236394">
    <property type="pathway name" value="Signaling by ERBB4"/>
</dbReference>
<dbReference type="Reactome" id="R-MMU-1250196">
    <property type="pathway name" value="SHC1 events in ERBB2 signaling"/>
</dbReference>
<dbReference type="Reactome" id="R-MMU-1250342">
    <property type="pathway name" value="PI3K events in ERBB4 signaling"/>
</dbReference>
<dbReference type="Reactome" id="R-MMU-1250347">
    <property type="pathway name" value="SHC1 events in ERBB4 signaling"/>
</dbReference>
<dbReference type="Reactome" id="R-MMU-1257604">
    <property type="pathway name" value="PIP3 activates AKT signaling"/>
</dbReference>
<dbReference type="Reactome" id="R-MMU-177929">
    <property type="pathway name" value="Signaling by EGFR"/>
</dbReference>
<dbReference type="Reactome" id="R-MMU-179812">
    <property type="pathway name" value="GRB2 events in EGFR signaling"/>
</dbReference>
<dbReference type="Reactome" id="R-MMU-180292">
    <property type="pathway name" value="GAB1 signalosome"/>
</dbReference>
<dbReference type="Reactome" id="R-MMU-180336">
    <property type="pathway name" value="SHC1 events in EGFR signaling"/>
</dbReference>
<dbReference type="Reactome" id="R-MMU-182971">
    <property type="pathway name" value="EGFR downregulation"/>
</dbReference>
<dbReference type="Reactome" id="R-MMU-1963640">
    <property type="pathway name" value="GRB2 events in ERBB2 signaling"/>
</dbReference>
<dbReference type="Reactome" id="R-MMU-1963642">
    <property type="pathway name" value="PI3K events in ERBB2 signaling"/>
</dbReference>
<dbReference type="Reactome" id="R-MMU-212718">
    <property type="pathway name" value="EGFR interacts with phospholipase C-gamma"/>
</dbReference>
<dbReference type="Reactome" id="R-MMU-5673001">
    <property type="pathway name" value="RAF/MAP kinase cascade"/>
</dbReference>
<dbReference type="Reactome" id="R-MMU-6785631">
    <property type="pathway name" value="ERBB2 Regulates Cell Motility"/>
</dbReference>
<dbReference type="Reactome" id="R-MMU-6811558">
    <property type="pathway name" value="PI5P, PP2A and IER3 Regulate PI3K/AKT Signaling"/>
</dbReference>
<dbReference type="Reactome" id="R-MMU-8847993">
    <property type="pathway name" value="ERBB2 Activates PTK6 Signaling"/>
</dbReference>
<dbReference type="Reactome" id="R-MMU-8856825">
    <property type="pathway name" value="Cargo recognition for clathrin-mediated endocytosis"/>
</dbReference>
<dbReference type="Reactome" id="R-MMU-8856828">
    <property type="pathway name" value="Clathrin-mediated endocytosis"/>
</dbReference>
<dbReference type="Reactome" id="R-MMU-8863795">
    <property type="pathway name" value="Downregulation of ERBB2 signaling"/>
</dbReference>
<dbReference type="Reactome" id="R-MMU-9009391">
    <property type="pathway name" value="Extra-nuclear estrogen signaling"/>
</dbReference>
<dbReference type="BioGRID-ORCS" id="12223">
    <property type="hits" value="1 hit in 77 CRISPR screens"/>
</dbReference>
<dbReference type="PRO" id="PR:Q05928"/>
<dbReference type="Proteomes" id="UP000000589">
    <property type="component" value="Chromosome 5"/>
</dbReference>
<dbReference type="RNAct" id="Q05928">
    <property type="molecule type" value="protein"/>
</dbReference>
<dbReference type="Bgee" id="ENSMUSG00000082361">
    <property type="expression patterns" value="Expressed in metanephric cortical collecting duct and 95 other cell types or tissues"/>
</dbReference>
<dbReference type="ExpressionAtlas" id="Q05928">
    <property type="expression patterns" value="baseline and differential"/>
</dbReference>
<dbReference type="GO" id="GO:0005615">
    <property type="term" value="C:extracellular space"/>
    <property type="evidence" value="ECO:0000314"/>
    <property type="project" value="MGI"/>
</dbReference>
<dbReference type="GO" id="GO:0016020">
    <property type="term" value="C:membrane"/>
    <property type="evidence" value="ECO:0000250"/>
    <property type="project" value="MGI"/>
</dbReference>
<dbReference type="GO" id="GO:0005886">
    <property type="term" value="C:plasma membrane"/>
    <property type="evidence" value="ECO:0007669"/>
    <property type="project" value="UniProtKB-SubCell"/>
</dbReference>
<dbReference type="GO" id="GO:0008083">
    <property type="term" value="F:growth factor activity"/>
    <property type="evidence" value="ECO:0007669"/>
    <property type="project" value="UniProtKB-KW"/>
</dbReference>
<dbReference type="GO" id="GO:0048018">
    <property type="term" value="F:receptor ligand activity"/>
    <property type="evidence" value="ECO:0000314"/>
    <property type="project" value="MGI"/>
</dbReference>
<dbReference type="GO" id="GO:0030297">
    <property type="term" value="F:transmembrane receptor protein tyrosine kinase activator activity"/>
    <property type="evidence" value="ECO:0000314"/>
    <property type="project" value="MGI"/>
</dbReference>
<dbReference type="GO" id="GO:0006915">
    <property type="term" value="P:apoptotic process"/>
    <property type="evidence" value="ECO:0000314"/>
    <property type="project" value="MGI"/>
</dbReference>
<dbReference type="GO" id="GO:0008283">
    <property type="term" value="P:cell population proliferation"/>
    <property type="evidence" value="ECO:0000316"/>
    <property type="project" value="MGI"/>
</dbReference>
<dbReference type="GO" id="GO:0007173">
    <property type="term" value="P:epidermal growth factor receptor signaling pathway"/>
    <property type="evidence" value="ECO:0000314"/>
    <property type="project" value="MGI"/>
</dbReference>
<dbReference type="GO" id="GO:1904019">
    <property type="term" value="P:epithelial cell apoptotic process"/>
    <property type="evidence" value="ECO:0000314"/>
    <property type="project" value="MGI"/>
</dbReference>
<dbReference type="GO" id="GO:0038134">
    <property type="term" value="P:ERBB2-EGFR signaling pathway"/>
    <property type="evidence" value="ECO:0000314"/>
    <property type="project" value="MGI"/>
</dbReference>
<dbReference type="GO" id="GO:0038138">
    <property type="term" value="P:ERBB4-ERBB4 signaling pathway"/>
    <property type="evidence" value="ECO:0000266"/>
    <property type="project" value="MGI"/>
</dbReference>
<dbReference type="GO" id="GO:1904036">
    <property type="term" value="P:negative regulation of epithelial cell apoptotic process"/>
    <property type="evidence" value="ECO:0000314"/>
    <property type="project" value="MGI"/>
</dbReference>
<dbReference type="GO" id="GO:0051781">
    <property type="term" value="P:positive regulation of cell division"/>
    <property type="evidence" value="ECO:0007669"/>
    <property type="project" value="UniProtKB-KW"/>
</dbReference>
<dbReference type="GO" id="GO:0008284">
    <property type="term" value="P:positive regulation of cell population proliferation"/>
    <property type="evidence" value="ECO:0000316"/>
    <property type="project" value="MGI"/>
</dbReference>
<dbReference type="GO" id="GO:0045840">
    <property type="term" value="P:positive regulation of mitotic nuclear division"/>
    <property type="evidence" value="ECO:0000250"/>
    <property type="project" value="MGI"/>
</dbReference>
<dbReference type="FunFam" id="2.10.25.10:FF:000342">
    <property type="entry name" value="Betacellulin preproprotein"/>
    <property type="match status" value="1"/>
</dbReference>
<dbReference type="Gene3D" id="2.10.25.10">
    <property type="entry name" value="Laminin"/>
    <property type="match status" value="1"/>
</dbReference>
<dbReference type="InterPro" id="IPR000742">
    <property type="entry name" value="EGF-like_dom"/>
</dbReference>
<dbReference type="PANTHER" id="PTHR10740:SF3">
    <property type="entry name" value="PROBETACELLULIN"/>
    <property type="match status" value="1"/>
</dbReference>
<dbReference type="PANTHER" id="PTHR10740">
    <property type="entry name" value="TRANSFORMING GROWTH FACTOR ALPHA"/>
    <property type="match status" value="1"/>
</dbReference>
<dbReference type="PRINTS" id="PR00009">
    <property type="entry name" value="EGFTGF"/>
</dbReference>
<dbReference type="SUPFAM" id="SSF57196">
    <property type="entry name" value="EGF/Laminin"/>
    <property type="match status" value="1"/>
</dbReference>
<dbReference type="PROSITE" id="PS00022">
    <property type="entry name" value="EGF_1"/>
    <property type="match status" value="1"/>
</dbReference>
<dbReference type="PROSITE" id="PS01186">
    <property type="entry name" value="EGF_2"/>
    <property type="match status" value="1"/>
</dbReference>
<dbReference type="PROSITE" id="PS50026">
    <property type="entry name" value="EGF_3"/>
    <property type="match status" value="1"/>
</dbReference>